<keyword id="KW-0687">Ribonucleoprotein</keyword>
<keyword id="KW-0689">Ribosomal protein</keyword>
<keyword id="KW-0694">RNA-binding</keyword>
<keyword id="KW-0699">rRNA-binding</keyword>
<dbReference type="EMBL" id="AP006841">
    <property type="protein sequence ID" value="BAD50918.1"/>
    <property type="molecule type" value="Genomic_DNA"/>
</dbReference>
<dbReference type="RefSeq" id="WP_005782201.1">
    <property type="nucleotide sequence ID" value="NZ_UYXF01000007.1"/>
</dbReference>
<dbReference type="RefSeq" id="YP_101452.1">
    <property type="nucleotide sequence ID" value="NC_006347.1"/>
</dbReference>
<dbReference type="SMR" id="Q64NL4"/>
<dbReference type="STRING" id="295405.BF4175"/>
<dbReference type="GeneID" id="93105318"/>
<dbReference type="KEGG" id="bfr:BF4175"/>
<dbReference type="PATRIC" id="fig|295405.11.peg.4029"/>
<dbReference type="HOGENOM" id="CLU_058591_0_2_10"/>
<dbReference type="OrthoDB" id="9806396at2"/>
<dbReference type="Proteomes" id="UP000002197">
    <property type="component" value="Chromosome"/>
</dbReference>
<dbReference type="GO" id="GO:0022627">
    <property type="term" value="C:cytosolic small ribosomal subunit"/>
    <property type="evidence" value="ECO:0007669"/>
    <property type="project" value="TreeGrafter"/>
</dbReference>
<dbReference type="GO" id="GO:0003729">
    <property type="term" value="F:mRNA binding"/>
    <property type="evidence" value="ECO:0007669"/>
    <property type="project" value="UniProtKB-UniRule"/>
</dbReference>
<dbReference type="GO" id="GO:0019843">
    <property type="term" value="F:rRNA binding"/>
    <property type="evidence" value="ECO:0007669"/>
    <property type="project" value="UniProtKB-UniRule"/>
</dbReference>
<dbReference type="GO" id="GO:0003735">
    <property type="term" value="F:structural constituent of ribosome"/>
    <property type="evidence" value="ECO:0007669"/>
    <property type="project" value="InterPro"/>
</dbReference>
<dbReference type="GO" id="GO:0006412">
    <property type="term" value="P:translation"/>
    <property type="evidence" value="ECO:0007669"/>
    <property type="project" value="UniProtKB-UniRule"/>
</dbReference>
<dbReference type="CDD" id="cd02412">
    <property type="entry name" value="KH-II_30S_S3"/>
    <property type="match status" value="1"/>
</dbReference>
<dbReference type="FunFam" id="3.30.1140.32:FF:000007">
    <property type="entry name" value="30S ribosomal protein S3"/>
    <property type="match status" value="1"/>
</dbReference>
<dbReference type="FunFam" id="3.30.300.20:FF:000001">
    <property type="entry name" value="30S ribosomal protein S3"/>
    <property type="match status" value="1"/>
</dbReference>
<dbReference type="Gene3D" id="3.30.300.20">
    <property type="match status" value="1"/>
</dbReference>
<dbReference type="Gene3D" id="3.30.1140.32">
    <property type="entry name" value="Ribosomal protein S3, C-terminal domain"/>
    <property type="match status" value="1"/>
</dbReference>
<dbReference type="HAMAP" id="MF_01309_B">
    <property type="entry name" value="Ribosomal_uS3_B"/>
    <property type="match status" value="1"/>
</dbReference>
<dbReference type="InterPro" id="IPR004087">
    <property type="entry name" value="KH_dom"/>
</dbReference>
<dbReference type="InterPro" id="IPR015946">
    <property type="entry name" value="KH_dom-like_a/b"/>
</dbReference>
<dbReference type="InterPro" id="IPR004044">
    <property type="entry name" value="KH_dom_type_2"/>
</dbReference>
<dbReference type="InterPro" id="IPR009019">
    <property type="entry name" value="KH_sf_prok-type"/>
</dbReference>
<dbReference type="InterPro" id="IPR036419">
    <property type="entry name" value="Ribosomal_S3_C_sf"/>
</dbReference>
<dbReference type="InterPro" id="IPR005704">
    <property type="entry name" value="Ribosomal_uS3_bac-typ"/>
</dbReference>
<dbReference type="InterPro" id="IPR001351">
    <property type="entry name" value="Ribosomal_uS3_C"/>
</dbReference>
<dbReference type="InterPro" id="IPR018280">
    <property type="entry name" value="Ribosomal_uS3_CS"/>
</dbReference>
<dbReference type="NCBIfam" id="TIGR01009">
    <property type="entry name" value="rpsC_bact"/>
    <property type="match status" value="1"/>
</dbReference>
<dbReference type="PANTHER" id="PTHR11760">
    <property type="entry name" value="30S/40S RIBOSOMAL PROTEIN S3"/>
    <property type="match status" value="1"/>
</dbReference>
<dbReference type="PANTHER" id="PTHR11760:SF19">
    <property type="entry name" value="SMALL RIBOSOMAL SUBUNIT PROTEIN US3C"/>
    <property type="match status" value="1"/>
</dbReference>
<dbReference type="Pfam" id="PF07650">
    <property type="entry name" value="KH_2"/>
    <property type="match status" value="1"/>
</dbReference>
<dbReference type="Pfam" id="PF00189">
    <property type="entry name" value="Ribosomal_S3_C"/>
    <property type="match status" value="1"/>
</dbReference>
<dbReference type="SMART" id="SM00322">
    <property type="entry name" value="KH"/>
    <property type="match status" value="1"/>
</dbReference>
<dbReference type="SUPFAM" id="SSF54814">
    <property type="entry name" value="Prokaryotic type KH domain (KH-domain type II)"/>
    <property type="match status" value="1"/>
</dbReference>
<dbReference type="SUPFAM" id="SSF54821">
    <property type="entry name" value="Ribosomal protein S3 C-terminal domain"/>
    <property type="match status" value="1"/>
</dbReference>
<dbReference type="PROSITE" id="PS50823">
    <property type="entry name" value="KH_TYPE_2"/>
    <property type="match status" value="1"/>
</dbReference>
<dbReference type="PROSITE" id="PS00548">
    <property type="entry name" value="RIBOSOMAL_S3"/>
    <property type="match status" value="1"/>
</dbReference>
<comment type="function">
    <text evidence="1">Binds the lower part of the 30S subunit head. Binds mRNA in the 70S ribosome, positioning it for translation.</text>
</comment>
<comment type="subunit">
    <text evidence="1">Part of the 30S ribosomal subunit. Forms a tight complex with proteins S10 and S14.</text>
</comment>
<comment type="similarity">
    <text evidence="1">Belongs to the universal ribosomal protein uS3 family.</text>
</comment>
<evidence type="ECO:0000255" key="1">
    <source>
        <dbReference type="HAMAP-Rule" id="MF_01309"/>
    </source>
</evidence>
<evidence type="ECO:0000256" key="2">
    <source>
        <dbReference type="SAM" id="MobiDB-lite"/>
    </source>
</evidence>
<evidence type="ECO:0000305" key="3"/>
<accession>Q64NL4</accession>
<protein>
    <recommendedName>
        <fullName evidence="1">Small ribosomal subunit protein uS3</fullName>
    </recommendedName>
    <alternativeName>
        <fullName evidence="3">30S ribosomal protein S3</fullName>
    </alternativeName>
</protein>
<sequence length="244" mass="27159">MGQKVNPISNRLGIIRGWDSNWYGGNDYGDSLLEDSKIRKYLNARLAKASVSRIVIERTLKLVTITVCTARPGIIIGKGGQEVDKLKEELKKVTDKDIQINIFEVKRPELDAVIVANNIARQVEGKIAYRRAIKMAIANTMRMGAEGIKIQISGRLNGAEMARSEMYKEGRTPLHTFRADIDYCHAEALTKVGLLGIKVWICRGEVFGKRELAPNFTQSKESGRGNNGGNNGGGKNFKRKKNNR</sequence>
<reference key="1">
    <citation type="journal article" date="2004" name="Proc. Natl. Acad. Sci. U.S.A.">
        <title>Genomic analysis of Bacteroides fragilis reveals extensive DNA inversions regulating cell surface adaptation.</title>
        <authorList>
            <person name="Kuwahara T."/>
            <person name="Yamashita A."/>
            <person name="Hirakawa H."/>
            <person name="Nakayama H."/>
            <person name="Toh H."/>
            <person name="Okada N."/>
            <person name="Kuhara S."/>
            <person name="Hattori M."/>
            <person name="Hayashi T."/>
            <person name="Ohnishi Y."/>
        </authorList>
    </citation>
    <scope>NUCLEOTIDE SEQUENCE [LARGE SCALE GENOMIC DNA]</scope>
    <source>
        <strain>YCH46</strain>
    </source>
</reference>
<gene>
    <name evidence="1" type="primary">rpsC</name>
    <name type="ordered locus">BF4175</name>
</gene>
<feature type="chain" id="PRO_0000130068" description="Small ribosomal subunit protein uS3">
    <location>
        <begin position="1"/>
        <end position="244"/>
    </location>
</feature>
<feature type="domain" description="KH type-2" evidence="1">
    <location>
        <begin position="38"/>
        <end position="106"/>
    </location>
</feature>
<feature type="region of interest" description="Disordered" evidence="2">
    <location>
        <begin position="217"/>
        <end position="244"/>
    </location>
</feature>
<feature type="compositionally biased region" description="Gly residues" evidence="2">
    <location>
        <begin position="225"/>
        <end position="235"/>
    </location>
</feature>
<name>RS3_BACFR</name>
<organism>
    <name type="scientific">Bacteroides fragilis (strain YCH46)</name>
    <dbReference type="NCBI Taxonomy" id="295405"/>
    <lineage>
        <taxon>Bacteria</taxon>
        <taxon>Pseudomonadati</taxon>
        <taxon>Bacteroidota</taxon>
        <taxon>Bacteroidia</taxon>
        <taxon>Bacteroidales</taxon>
        <taxon>Bacteroidaceae</taxon>
        <taxon>Bacteroides</taxon>
    </lineage>
</organism>
<proteinExistence type="inferred from homology"/>